<name>COAX_ACIET</name>
<comment type="function">
    <text evidence="1">Catalyzes the phosphorylation of pantothenate (Pan), the first step in CoA biosynthesis.</text>
</comment>
<comment type="catalytic activity">
    <reaction evidence="1">
        <text>(R)-pantothenate + ATP = (R)-4'-phosphopantothenate + ADP + H(+)</text>
        <dbReference type="Rhea" id="RHEA:16373"/>
        <dbReference type="ChEBI" id="CHEBI:10986"/>
        <dbReference type="ChEBI" id="CHEBI:15378"/>
        <dbReference type="ChEBI" id="CHEBI:29032"/>
        <dbReference type="ChEBI" id="CHEBI:30616"/>
        <dbReference type="ChEBI" id="CHEBI:456216"/>
        <dbReference type="EC" id="2.7.1.33"/>
    </reaction>
</comment>
<comment type="cofactor">
    <cofactor evidence="1">
        <name>NH4(+)</name>
        <dbReference type="ChEBI" id="CHEBI:28938"/>
    </cofactor>
    <cofactor evidence="1">
        <name>K(+)</name>
        <dbReference type="ChEBI" id="CHEBI:29103"/>
    </cofactor>
    <text evidence="1">A monovalent cation. Ammonium or potassium.</text>
</comment>
<comment type="pathway">
    <text evidence="1">Cofactor biosynthesis; coenzyme A biosynthesis; CoA from (R)-pantothenate: step 1/5.</text>
</comment>
<comment type="subunit">
    <text evidence="1">Homodimer.</text>
</comment>
<comment type="subcellular location">
    <subcellularLocation>
        <location evidence="1">Cytoplasm</location>
    </subcellularLocation>
</comment>
<comment type="similarity">
    <text evidence="1">Belongs to the type III pantothenate kinase family.</text>
</comment>
<keyword id="KW-0067">ATP-binding</keyword>
<keyword id="KW-0173">Coenzyme A biosynthesis</keyword>
<keyword id="KW-0963">Cytoplasm</keyword>
<keyword id="KW-0418">Kinase</keyword>
<keyword id="KW-0547">Nucleotide-binding</keyword>
<keyword id="KW-0630">Potassium</keyword>
<keyword id="KW-1185">Reference proteome</keyword>
<keyword id="KW-0808">Transferase</keyword>
<sequence>MTFLAIDVGNTRLKWALFDAAQPGAGLLAHGAEFLDHIERLAEGPWSHLPAPRHMLGCVVAGDAVKRRVAEQMELWDVPARWVVPSAQEAGVINGYDHPTRLGADRWVAMIGARHRLLAQGPARPLIVVMVGTAVTVEALDAEGRFLGGLILPGHGIMLRALESGTAGLHVPTGEVRLFPSNTSDALTSGGTYAIAGAVERMYQHLRQHCGQEPACMMTGGAGWKMAPSMTRPFELVENLIFDGLLEIAARRFAELPA</sequence>
<protein>
    <recommendedName>
        <fullName evidence="1">Type III pantothenate kinase</fullName>
        <ecNumber evidence="1">2.7.1.33</ecNumber>
    </recommendedName>
    <alternativeName>
        <fullName evidence="1">PanK-III</fullName>
    </alternativeName>
    <alternativeName>
        <fullName evidence="1">Pantothenic acid kinase</fullName>
    </alternativeName>
</protein>
<dbReference type="EC" id="2.7.1.33" evidence="1"/>
<dbReference type="EMBL" id="CP001392">
    <property type="protein sequence ID" value="ACM32030.1"/>
    <property type="molecule type" value="Genomic_DNA"/>
</dbReference>
<dbReference type="RefSeq" id="WP_011803993.1">
    <property type="nucleotide sequence ID" value="NC_011992.1"/>
</dbReference>
<dbReference type="SMR" id="B9MCN0"/>
<dbReference type="KEGG" id="dia:Dtpsy_0550"/>
<dbReference type="eggNOG" id="COG1521">
    <property type="taxonomic scope" value="Bacteria"/>
</dbReference>
<dbReference type="HOGENOM" id="CLU_066627_0_0_4"/>
<dbReference type="UniPathway" id="UPA00241">
    <property type="reaction ID" value="UER00352"/>
</dbReference>
<dbReference type="Proteomes" id="UP000000450">
    <property type="component" value="Chromosome"/>
</dbReference>
<dbReference type="GO" id="GO:0005737">
    <property type="term" value="C:cytoplasm"/>
    <property type="evidence" value="ECO:0007669"/>
    <property type="project" value="UniProtKB-SubCell"/>
</dbReference>
<dbReference type="GO" id="GO:0005524">
    <property type="term" value="F:ATP binding"/>
    <property type="evidence" value="ECO:0007669"/>
    <property type="project" value="UniProtKB-UniRule"/>
</dbReference>
<dbReference type="GO" id="GO:0004594">
    <property type="term" value="F:pantothenate kinase activity"/>
    <property type="evidence" value="ECO:0007669"/>
    <property type="project" value="UniProtKB-UniRule"/>
</dbReference>
<dbReference type="GO" id="GO:0015937">
    <property type="term" value="P:coenzyme A biosynthetic process"/>
    <property type="evidence" value="ECO:0007669"/>
    <property type="project" value="UniProtKB-UniRule"/>
</dbReference>
<dbReference type="CDD" id="cd24015">
    <property type="entry name" value="ASKHA_NBD_PanK-III"/>
    <property type="match status" value="1"/>
</dbReference>
<dbReference type="Gene3D" id="3.30.420.40">
    <property type="match status" value="2"/>
</dbReference>
<dbReference type="HAMAP" id="MF_01274">
    <property type="entry name" value="Pantothen_kinase_3"/>
    <property type="match status" value="1"/>
</dbReference>
<dbReference type="InterPro" id="IPR043129">
    <property type="entry name" value="ATPase_NBD"/>
</dbReference>
<dbReference type="InterPro" id="IPR004619">
    <property type="entry name" value="Type_III_PanK"/>
</dbReference>
<dbReference type="NCBIfam" id="TIGR00671">
    <property type="entry name" value="baf"/>
    <property type="match status" value="1"/>
</dbReference>
<dbReference type="PANTHER" id="PTHR34265">
    <property type="entry name" value="TYPE III PANTOTHENATE KINASE"/>
    <property type="match status" value="1"/>
</dbReference>
<dbReference type="PANTHER" id="PTHR34265:SF1">
    <property type="entry name" value="TYPE III PANTOTHENATE KINASE"/>
    <property type="match status" value="1"/>
</dbReference>
<dbReference type="Pfam" id="PF03309">
    <property type="entry name" value="Pan_kinase"/>
    <property type="match status" value="1"/>
</dbReference>
<dbReference type="SUPFAM" id="SSF53067">
    <property type="entry name" value="Actin-like ATPase domain"/>
    <property type="match status" value="2"/>
</dbReference>
<reference key="1">
    <citation type="submission" date="2009-01" db="EMBL/GenBank/DDBJ databases">
        <title>Complete sequence of Diaphorobacter sp. TPSY.</title>
        <authorList>
            <consortium name="US DOE Joint Genome Institute"/>
            <person name="Lucas S."/>
            <person name="Copeland A."/>
            <person name="Lapidus A."/>
            <person name="Glavina del Rio T."/>
            <person name="Tice H."/>
            <person name="Bruce D."/>
            <person name="Goodwin L."/>
            <person name="Pitluck S."/>
            <person name="Chertkov O."/>
            <person name="Brettin T."/>
            <person name="Detter J.C."/>
            <person name="Han C."/>
            <person name="Larimer F."/>
            <person name="Land M."/>
            <person name="Hauser L."/>
            <person name="Kyrpides N."/>
            <person name="Mikhailova N."/>
            <person name="Coates J.D."/>
        </authorList>
    </citation>
    <scope>NUCLEOTIDE SEQUENCE [LARGE SCALE GENOMIC DNA]</scope>
    <source>
        <strain>TPSY</strain>
    </source>
</reference>
<organism>
    <name type="scientific">Acidovorax ebreus (strain TPSY)</name>
    <name type="common">Diaphorobacter sp. (strain TPSY)</name>
    <dbReference type="NCBI Taxonomy" id="535289"/>
    <lineage>
        <taxon>Bacteria</taxon>
        <taxon>Pseudomonadati</taxon>
        <taxon>Pseudomonadota</taxon>
        <taxon>Betaproteobacteria</taxon>
        <taxon>Burkholderiales</taxon>
        <taxon>Comamonadaceae</taxon>
        <taxon>Diaphorobacter</taxon>
    </lineage>
</organism>
<accession>B9MCN0</accession>
<evidence type="ECO:0000255" key="1">
    <source>
        <dbReference type="HAMAP-Rule" id="MF_01274"/>
    </source>
</evidence>
<proteinExistence type="inferred from homology"/>
<feature type="chain" id="PRO_1000165196" description="Type III pantothenate kinase">
    <location>
        <begin position="1"/>
        <end position="258"/>
    </location>
</feature>
<feature type="active site" description="Proton acceptor" evidence="1">
    <location>
        <position position="105"/>
    </location>
</feature>
<feature type="binding site" evidence="1">
    <location>
        <begin position="7"/>
        <end position="14"/>
    </location>
    <ligand>
        <name>ATP</name>
        <dbReference type="ChEBI" id="CHEBI:30616"/>
    </ligand>
</feature>
<feature type="binding site" evidence="1">
    <location>
        <position position="96"/>
    </location>
    <ligand>
        <name>substrate</name>
    </ligand>
</feature>
<feature type="binding site" evidence="1">
    <location>
        <begin position="103"/>
        <end position="106"/>
    </location>
    <ligand>
        <name>substrate</name>
    </ligand>
</feature>
<feature type="binding site" evidence="1">
    <location>
        <position position="133"/>
    </location>
    <ligand>
        <name>ATP</name>
        <dbReference type="ChEBI" id="CHEBI:30616"/>
    </ligand>
</feature>
<feature type="binding site" evidence="1">
    <location>
        <position position="183"/>
    </location>
    <ligand>
        <name>substrate</name>
    </ligand>
</feature>
<gene>
    <name evidence="1" type="primary">coaX</name>
    <name type="ordered locus">Dtpsy_0550</name>
</gene>